<feature type="chain" id="PRO_1000082050" description="Succinate--CoA ligase [ADP-forming] subunit beta">
    <location>
        <begin position="1"/>
        <end position="390"/>
    </location>
</feature>
<feature type="domain" description="ATP-grasp" evidence="1">
    <location>
        <begin position="9"/>
        <end position="244"/>
    </location>
</feature>
<feature type="binding site" evidence="1">
    <location>
        <position position="46"/>
    </location>
    <ligand>
        <name>ATP</name>
        <dbReference type="ChEBI" id="CHEBI:30616"/>
    </ligand>
</feature>
<feature type="binding site" evidence="1">
    <location>
        <begin position="53"/>
        <end position="55"/>
    </location>
    <ligand>
        <name>ATP</name>
        <dbReference type="ChEBI" id="CHEBI:30616"/>
    </ligand>
</feature>
<feature type="binding site" evidence="1">
    <location>
        <position position="99"/>
    </location>
    <ligand>
        <name>ATP</name>
        <dbReference type="ChEBI" id="CHEBI:30616"/>
    </ligand>
</feature>
<feature type="binding site" evidence="1">
    <location>
        <position position="102"/>
    </location>
    <ligand>
        <name>ATP</name>
        <dbReference type="ChEBI" id="CHEBI:30616"/>
    </ligand>
</feature>
<feature type="binding site" evidence="1">
    <location>
        <position position="107"/>
    </location>
    <ligand>
        <name>ATP</name>
        <dbReference type="ChEBI" id="CHEBI:30616"/>
    </ligand>
</feature>
<feature type="binding site" evidence="1">
    <location>
        <position position="199"/>
    </location>
    <ligand>
        <name>Mg(2+)</name>
        <dbReference type="ChEBI" id="CHEBI:18420"/>
    </ligand>
</feature>
<feature type="binding site" evidence="1">
    <location>
        <position position="213"/>
    </location>
    <ligand>
        <name>Mg(2+)</name>
        <dbReference type="ChEBI" id="CHEBI:18420"/>
    </ligand>
</feature>
<feature type="binding site" evidence="1">
    <location>
        <position position="264"/>
    </location>
    <ligand>
        <name>substrate</name>
        <note>ligand shared with subunit alpha</note>
    </ligand>
</feature>
<feature type="binding site" evidence="1">
    <location>
        <begin position="321"/>
        <end position="323"/>
    </location>
    <ligand>
        <name>substrate</name>
        <note>ligand shared with subunit alpha</note>
    </ligand>
</feature>
<sequence length="390" mass="42604">MNIHEFQAKEILKRYGVNVAKGAVAENLEQASEILNDLEGEIFALKAQIHAGGRGLAGGVKIASSREQAIQFASKLLGMTLITPQTPKNGILVRKIYIEEGLNFKQEIYLSLAFDRNSEKISLIVSKDGGVSIEETAKQNPHLIKTISIDPQIGLCGFHTKELINFLQIDKILWSKLDTLLQNLYKIYIFKDANLIEINPLVLTQDDEFYALDAKMSFDDSALFRHEDIRALNDETQTDTSENEAKAQRLNYIKLEGSVGCVVNGAGLAMATMDIIKELGGEAANFLDVGGAATGEGVAKAFRLILNDRRVKVIFVNIFGGIVRCDRIAAGIIEACQSTPLGVPVVVRLDGTNAKEALDMLKNSALKGLHTSDDLFEGARLAVMLAKGEK</sequence>
<evidence type="ECO:0000255" key="1">
    <source>
        <dbReference type="HAMAP-Rule" id="MF_00558"/>
    </source>
</evidence>
<comment type="function">
    <text evidence="1">Succinyl-CoA synthetase functions in the citric acid cycle (TCA), coupling the hydrolysis of succinyl-CoA to the synthesis of either ATP or GTP and thus represents the only step of substrate-level phosphorylation in the TCA. The beta subunit provides nucleotide specificity of the enzyme and binds the substrate succinate, while the binding sites for coenzyme A and phosphate are found in the alpha subunit.</text>
</comment>
<comment type="catalytic activity">
    <reaction evidence="1">
        <text>succinate + ATP + CoA = succinyl-CoA + ADP + phosphate</text>
        <dbReference type="Rhea" id="RHEA:17661"/>
        <dbReference type="ChEBI" id="CHEBI:30031"/>
        <dbReference type="ChEBI" id="CHEBI:30616"/>
        <dbReference type="ChEBI" id="CHEBI:43474"/>
        <dbReference type="ChEBI" id="CHEBI:57287"/>
        <dbReference type="ChEBI" id="CHEBI:57292"/>
        <dbReference type="ChEBI" id="CHEBI:456216"/>
        <dbReference type="EC" id="6.2.1.5"/>
    </reaction>
    <physiologicalReaction direction="right-to-left" evidence="1">
        <dbReference type="Rhea" id="RHEA:17663"/>
    </physiologicalReaction>
</comment>
<comment type="catalytic activity">
    <reaction evidence="1">
        <text>GTP + succinate + CoA = succinyl-CoA + GDP + phosphate</text>
        <dbReference type="Rhea" id="RHEA:22120"/>
        <dbReference type="ChEBI" id="CHEBI:30031"/>
        <dbReference type="ChEBI" id="CHEBI:37565"/>
        <dbReference type="ChEBI" id="CHEBI:43474"/>
        <dbReference type="ChEBI" id="CHEBI:57287"/>
        <dbReference type="ChEBI" id="CHEBI:57292"/>
        <dbReference type="ChEBI" id="CHEBI:58189"/>
    </reaction>
    <physiologicalReaction direction="right-to-left" evidence="1">
        <dbReference type="Rhea" id="RHEA:22122"/>
    </physiologicalReaction>
</comment>
<comment type="cofactor">
    <cofactor evidence="1">
        <name>Mg(2+)</name>
        <dbReference type="ChEBI" id="CHEBI:18420"/>
    </cofactor>
    <text evidence="1">Binds 1 Mg(2+) ion per subunit.</text>
</comment>
<comment type="pathway">
    <text evidence="1">Carbohydrate metabolism; tricarboxylic acid cycle; succinate from succinyl-CoA (ligase route): step 1/1.</text>
</comment>
<comment type="subunit">
    <text evidence="1">Heterotetramer of two alpha and two beta subunits.</text>
</comment>
<comment type="similarity">
    <text evidence="1">Belongs to the succinate/malate CoA ligase beta subunit family.</text>
</comment>
<organism>
    <name type="scientific">Campylobacter curvus (strain 525.92)</name>
    <dbReference type="NCBI Taxonomy" id="360105"/>
    <lineage>
        <taxon>Bacteria</taxon>
        <taxon>Pseudomonadati</taxon>
        <taxon>Campylobacterota</taxon>
        <taxon>Epsilonproteobacteria</taxon>
        <taxon>Campylobacterales</taxon>
        <taxon>Campylobacteraceae</taxon>
        <taxon>Campylobacter</taxon>
    </lineage>
</organism>
<accession>A7GYI5</accession>
<proteinExistence type="inferred from homology"/>
<dbReference type="EC" id="6.2.1.5" evidence="1"/>
<dbReference type="EMBL" id="CP000767">
    <property type="protein sequence ID" value="EAU00099.1"/>
    <property type="molecule type" value="Genomic_DNA"/>
</dbReference>
<dbReference type="RefSeq" id="WP_011992301.1">
    <property type="nucleotide sequence ID" value="NC_009715.2"/>
</dbReference>
<dbReference type="SMR" id="A7GYI5"/>
<dbReference type="STRING" id="360105.CCV52592_1882"/>
<dbReference type="KEGG" id="ccv:CCV52592_1882"/>
<dbReference type="HOGENOM" id="CLU_037430_0_2_7"/>
<dbReference type="OrthoDB" id="9802602at2"/>
<dbReference type="UniPathway" id="UPA00223">
    <property type="reaction ID" value="UER00999"/>
</dbReference>
<dbReference type="Proteomes" id="UP000006380">
    <property type="component" value="Chromosome"/>
</dbReference>
<dbReference type="GO" id="GO:0005829">
    <property type="term" value="C:cytosol"/>
    <property type="evidence" value="ECO:0007669"/>
    <property type="project" value="TreeGrafter"/>
</dbReference>
<dbReference type="GO" id="GO:0042709">
    <property type="term" value="C:succinate-CoA ligase complex"/>
    <property type="evidence" value="ECO:0007669"/>
    <property type="project" value="TreeGrafter"/>
</dbReference>
<dbReference type="GO" id="GO:0005524">
    <property type="term" value="F:ATP binding"/>
    <property type="evidence" value="ECO:0007669"/>
    <property type="project" value="UniProtKB-UniRule"/>
</dbReference>
<dbReference type="GO" id="GO:0000287">
    <property type="term" value="F:magnesium ion binding"/>
    <property type="evidence" value="ECO:0007669"/>
    <property type="project" value="UniProtKB-UniRule"/>
</dbReference>
<dbReference type="GO" id="GO:0004775">
    <property type="term" value="F:succinate-CoA ligase (ADP-forming) activity"/>
    <property type="evidence" value="ECO:0007669"/>
    <property type="project" value="UniProtKB-UniRule"/>
</dbReference>
<dbReference type="GO" id="GO:0004776">
    <property type="term" value="F:succinate-CoA ligase (GDP-forming) activity"/>
    <property type="evidence" value="ECO:0007669"/>
    <property type="project" value="RHEA"/>
</dbReference>
<dbReference type="GO" id="GO:0006104">
    <property type="term" value="P:succinyl-CoA metabolic process"/>
    <property type="evidence" value="ECO:0007669"/>
    <property type="project" value="TreeGrafter"/>
</dbReference>
<dbReference type="GO" id="GO:0006099">
    <property type="term" value="P:tricarboxylic acid cycle"/>
    <property type="evidence" value="ECO:0007669"/>
    <property type="project" value="UniProtKB-UniRule"/>
</dbReference>
<dbReference type="FunFam" id="3.30.1490.20:FF:000002">
    <property type="entry name" value="Succinate--CoA ligase [ADP-forming] subunit beta"/>
    <property type="match status" value="1"/>
</dbReference>
<dbReference type="FunFam" id="3.30.470.20:FF:000002">
    <property type="entry name" value="Succinate--CoA ligase [ADP-forming] subunit beta"/>
    <property type="match status" value="1"/>
</dbReference>
<dbReference type="FunFam" id="3.40.50.261:FF:000001">
    <property type="entry name" value="Succinate--CoA ligase [ADP-forming] subunit beta"/>
    <property type="match status" value="1"/>
</dbReference>
<dbReference type="Gene3D" id="3.30.1490.20">
    <property type="entry name" value="ATP-grasp fold, A domain"/>
    <property type="match status" value="1"/>
</dbReference>
<dbReference type="Gene3D" id="3.30.470.20">
    <property type="entry name" value="ATP-grasp fold, B domain"/>
    <property type="match status" value="1"/>
</dbReference>
<dbReference type="Gene3D" id="3.40.50.261">
    <property type="entry name" value="Succinyl-CoA synthetase domains"/>
    <property type="match status" value="1"/>
</dbReference>
<dbReference type="HAMAP" id="MF_00558">
    <property type="entry name" value="Succ_CoA_beta"/>
    <property type="match status" value="1"/>
</dbReference>
<dbReference type="InterPro" id="IPR013650">
    <property type="entry name" value="ATP-grasp_succ-CoA_synth-type"/>
</dbReference>
<dbReference type="InterPro" id="IPR013815">
    <property type="entry name" value="ATP_grasp_subdomain_1"/>
</dbReference>
<dbReference type="InterPro" id="IPR017866">
    <property type="entry name" value="Succ-CoA_synthase_bsu_CS"/>
</dbReference>
<dbReference type="InterPro" id="IPR005811">
    <property type="entry name" value="SUCC_ACL_C"/>
</dbReference>
<dbReference type="InterPro" id="IPR005809">
    <property type="entry name" value="Succ_CoA_ligase-like_bsu"/>
</dbReference>
<dbReference type="InterPro" id="IPR016102">
    <property type="entry name" value="Succinyl-CoA_synth-like"/>
</dbReference>
<dbReference type="NCBIfam" id="NF001913">
    <property type="entry name" value="PRK00696.1"/>
    <property type="match status" value="1"/>
</dbReference>
<dbReference type="NCBIfam" id="TIGR01016">
    <property type="entry name" value="sucCoAbeta"/>
    <property type="match status" value="1"/>
</dbReference>
<dbReference type="PANTHER" id="PTHR11815:SF10">
    <property type="entry name" value="SUCCINATE--COA LIGASE [GDP-FORMING] SUBUNIT BETA, MITOCHONDRIAL"/>
    <property type="match status" value="1"/>
</dbReference>
<dbReference type="PANTHER" id="PTHR11815">
    <property type="entry name" value="SUCCINYL-COA SYNTHETASE BETA CHAIN"/>
    <property type="match status" value="1"/>
</dbReference>
<dbReference type="Pfam" id="PF08442">
    <property type="entry name" value="ATP-grasp_2"/>
    <property type="match status" value="1"/>
</dbReference>
<dbReference type="Pfam" id="PF00549">
    <property type="entry name" value="Ligase_CoA"/>
    <property type="match status" value="1"/>
</dbReference>
<dbReference type="PIRSF" id="PIRSF001554">
    <property type="entry name" value="SucCS_beta"/>
    <property type="match status" value="1"/>
</dbReference>
<dbReference type="SUPFAM" id="SSF56059">
    <property type="entry name" value="Glutathione synthetase ATP-binding domain-like"/>
    <property type="match status" value="1"/>
</dbReference>
<dbReference type="SUPFAM" id="SSF52210">
    <property type="entry name" value="Succinyl-CoA synthetase domains"/>
    <property type="match status" value="1"/>
</dbReference>
<dbReference type="PROSITE" id="PS01217">
    <property type="entry name" value="SUCCINYL_COA_LIG_3"/>
    <property type="match status" value="1"/>
</dbReference>
<protein>
    <recommendedName>
        <fullName evidence="1">Succinate--CoA ligase [ADP-forming] subunit beta</fullName>
        <ecNumber evidence="1">6.2.1.5</ecNumber>
    </recommendedName>
    <alternativeName>
        <fullName evidence="1">Succinyl-CoA synthetase subunit beta</fullName>
        <shortName evidence="1">SCS-beta</shortName>
    </alternativeName>
</protein>
<gene>
    <name evidence="1" type="primary">sucC</name>
    <name type="ordered locus">Ccur92_09730</name>
    <name type="ORF">CCV52592_1882</name>
</gene>
<keyword id="KW-0067">ATP-binding</keyword>
<keyword id="KW-0436">Ligase</keyword>
<keyword id="KW-0460">Magnesium</keyword>
<keyword id="KW-0479">Metal-binding</keyword>
<keyword id="KW-0547">Nucleotide-binding</keyword>
<keyword id="KW-1185">Reference proteome</keyword>
<keyword id="KW-0816">Tricarboxylic acid cycle</keyword>
<name>SUCC_CAMC5</name>
<reference key="1">
    <citation type="submission" date="2007-07" db="EMBL/GenBank/DDBJ databases">
        <title>Genome sequence of Campylobacter curvus 525.92 isolated from human feces.</title>
        <authorList>
            <person name="Fouts D.E."/>
            <person name="Mongodin E.F."/>
            <person name="Puiu D."/>
            <person name="Sebastian Y."/>
            <person name="Miller W.G."/>
            <person name="Mandrell R.E."/>
            <person name="Lastovica A.J."/>
            <person name="Nelson K.E."/>
        </authorList>
    </citation>
    <scope>NUCLEOTIDE SEQUENCE [LARGE SCALE GENOMIC DNA]</scope>
    <source>
        <strain>525.92</strain>
    </source>
</reference>